<evidence type="ECO:0000255" key="1">
    <source>
        <dbReference type="HAMAP-Rule" id="MF_01389"/>
    </source>
</evidence>
<organism>
    <name type="scientific">Cereibacter sphaeroides (strain ATCC 17025 / ATH 2.4.3)</name>
    <name type="common">Rhodobacter sphaeroides</name>
    <dbReference type="NCBI Taxonomy" id="349102"/>
    <lineage>
        <taxon>Bacteria</taxon>
        <taxon>Pseudomonadati</taxon>
        <taxon>Pseudomonadota</taxon>
        <taxon>Alphaproteobacteria</taxon>
        <taxon>Rhodobacterales</taxon>
        <taxon>Paracoccaceae</taxon>
        <taxon>Cereibacter</taxon>
    </lineage>
</organism>
<keyword id="KW-0143">Chaperone</keyword>
<keyword id="KW-0963">Cytoplasm</keyword>
<keyword id="KW-0342">GTP-binding</keyword>
<keyword id="KW-0996">Nickel insertion</keyword>
<keyword id="KW-0547">Nucleotide-binding</keyword>
<proteinExistence type="inferred from homology"/>
<accession>A4WR79</accession>
<reference key="1">
    <citation type="submission" date="2007-04" db="EMBL/GenBank/DDBJ databases">
        <title>Complete sequence of chromosome of Rhodobacter sphaeroides ATCC 17025.</title>
        <authorList>
            <consortium name="US DOE Joint Genome Institute"/>
            <person name="Copeland A."/>
            <person name="Lucas S."/>
            <person name="Lapidus A."/>
            <person name="Barry K."/>
            <person name="Detter J.C."/>
            <person name="Glavina del Rio T."/>
            <person name="Hammon N."/>
            <person name="Israni S."/>
            <person name="Dalin E."/>
            <person name="Tice H."/>
            <person name="Pitluck S."/>
            <person name="Chertkov O."/>
            <person name="Brettin T."/>
            <person name="Bruce D."/>
            <person name="Han C."/>
            <person name="Schmutz J."/>
            <person name="Larimer F."/>
            <person name="Land M."/>
            <person name="Hauser L."/>
            <person name="Kyrpides N."/>
            <person name="Kim E."/>
            <person name="Richardson P."/>
            <person name="Mackenzie C."/>
            <person name="Choudhary M."/>
            <person name="Donohue T.J."/>
            <person name="Kaplan S."/>
        </authorList>
    </citation>
    <scope>NUCLEOTIDE SEQUENCE [LARGE SCALE GENOMIC DNA]</scope>
    <source>
        <strain>ATCC 17025 / ATH 2.4.3</strain>
    </source>
</reference>
<dbReference type="EMBL" id="CP000661">
    <property type="protein sequence ID" value="ABP69893.1"/>
    <property type="molecule type" value="Genomic_DNA"/>
</dbReference>
<dbReference type="SMR" id="A4WR79"/>
<dbReference type="STRING" id="349102.Rsph17025_0992"/>
<dbReference type="KEGG" id="rsq:Rsph17025_0992"/>
<dbReference type="eggNOG" id="COG0378">
    <property type="taxonomic scope" value="Bacteria"/>
</dbReference>
<dbReference type="HOGENOM" id="CLU_072144_1_0_5"/>
<dbReference type="BioCyc" id="RSPH349102:G1G8M-1018-MONOMER"/>
<dbReference type="GO" id="GO:0005737">
    <property type="term" value="C:cytoplasm"/>
    <property type="evidence" value="ECO:0007669"/>
    <property type="project" value="UniProtKB-SubCell"/>
</dbReference>
<dbReference type="GO" id="GO:0005525">
    <property type="term" value="F:GTP binding"/>
    <property type="evidence" value="ECO:0007669"/>
    <property type="project" value="UniProtKB-KW"/>
</dbReference>
<dbReference type="GO" id="GO:0003924">
    <property type="term" value="F:GTPase activity"/>
    <property type="evidence" value="ECO:0007669"/>
    <property type="project" value="InterPro"/>
</dbReference>
<dbReference type="GO" id="GO:0016151">
    <property type="term" value="F:nickel cation binding"/>
    <property type="evidence" value="ECO:0007669"/>
    <property type="project" value="UniProtKB-UniRule"/>
</dbReference>
<dbReference type="GO" id="GO:0043419">
    <property type="term" value="P:urea catabolic process"/>
    <property type="evidence" value="ECO:0007669"/>
    <property type="project" value="InterPro"/>
</dbReference>
<dbReference type="CDD" id="cd05540">
    <property type="entry name" value="UreG"/>
    <property type="match status" value="1"/>
</dbReference>
<dbReference type="Gene3D" id="3.40.50.300">
    <property type="entry name" value="P-loop containing nucleotide triphosphate hydrolases"/>
    <property type="match status" value="1"/>
</dbReference>
<dbReference type="HAMAP" id="MF_01389">
    <property type="entry name" value="UreG"/>
    <property type="match status" value="1"/>
</dbReference>
<dbReference type="InterPro" id="IPR003495">
    <property type="entry name" value="CobW/HypB/UreG_nucleotide-bd"/>
</dbReference>
<dbReference type="InterPro" id="IPR027417">
    <property type="entry name" value="P-loop_NTPase"/>
</dbReference>
<dbReference type="InterPro" id="IPR004400">
    <property type="entry name" value="UreG"/>
</dbReference>
<dbReference type="NCBIfam" id="TIGR00101">
    <property type="entry name" value="ureG"/>
    <property type="match status" value="1"/>
</dbReference>
<dbReference type="PANTHER" id="PTHR31715">
    <property type="entry name" value="UREASE ACCESSORY PROTEIN G"/>
    <property type="match status" value="1"/>
</dbReference>
<dbReference type="PANTHER" id="PTHR31715:SF0">
    <property type="entry name" value="UREASE ACCESSORY PROTEIN G"/>
    <property type="match status" value="1"/>
</dbReference>
<dbReference type="Pfam" id="PF02492">
    <property type="entry name" value="cobW"/>
    <property type="match status" value="1"/>
</dbReference>
<dbReference type="PIRSF" id="PIRSF005624">
    <property type="entry name" value="Ni-bind_GTPase"/>
    <property type="match status" value="1"/>
</dbReference>
<dbReference type="SUPFAM" id="SSF52540">
    <property type="entry name" value="P-loop containing nucleoside triphosphate hydrolases"/>
    <property type="match status" value="1"/>
</dbReference>
<sequence>MSHGPLRVGIGGPVGAGKTTLTEKLCAALAHRCSMAVITNDIYTREDAEALMRAQVLPAERIRGVETGGCPHTAIREDASINLAAVADLRRAFPDLDLILIESGGDNLAATFSPELADLTLYVIDTAAGQDIPRKRGPGLARSDLLVVNKTDLAPHVGVDLRLLEEDTKTARGRRPYVMAQLRRGAGVAEIVAFLEREGGLQLLPQE</sequence>
<protein>
    <recommendedName>
        <fullName evidence="1">Urease accessory protein UreG</fullName>
    </recommendedName>
</protein>
<name>UREG_CERS5</name>
<comment type="function">
    <text evidence="1">Facilitates the functional incorporation of the urease nickel metallocenter. This process requires GTP hydrolysis, probably effectuated by UreG.</text>
</comment>
<comment type="subunit">
    <text evidence="1">Homodimer. UreD, UreF and UreG form a complex that acts as a GTP-hydrolysis-dependent molecular chaperone, activating the urease apoprotein by helping to assemble the nickel containing metallocenter of UreC. The UreE protein probably delivers the nickel.</text>
</comment>
<comment type="subcellular location">
    <subcellularLocation>
        <location evidence="1">Cytoplasm</location>
    </subcellularLocation>
</comment>
<comment type="similarity">
    <text evidence="1">Belongs to the SIMIBI class G3E GTPase family. UreG subfamily.</text>
</comment>
<gene>
    <name evidence="1" type="primary">ureG</name>
    <name type="ordered locus">Rsph17025_0992</name>
</gene>
<feature type="chain" id="PRO_0000347439" description="Urease accessory protein UreG">
    <location>
        <begin position="1"/>
        <end position="207"/>
    </location>
</feature>
<feature type="binding site" evidence="1">
    <location>
        <begin position="12"/>
        <end position="19"/>
    </location>
    <ligand>
        <name>GTP</name>
        <dbReference type="ChEBI" id="CHEBI:37565"/>
    </ligand>
</feature>